<organism>
    <name type="scientific">Lacticaseibacillus paracasei (strain ATCC 334 / BCRC 17002 / CCUG 31169 / CIP 107868 / KCTC 3260 / NRRL B-441)</name>
    <name type="common">Lactobacillus paracasei</name>
    <dbReference type="NCBI Taxonomy" id="321967"/>
    <lineage>
        <taxon>Bacteria</taxon>
        <taxon>Bacillati</taxon>
        <taxon>Bacillota</taxon>
        <taxon>Bacilli</taxon>
        <taxon>Lactobacillales</taxon>
        <taxon>Lactobacillaceae</taxon>
        <taxon>Lacticaseibacillus</taxon>
    </lineage>
</organism>
<reference key="1">
    <citation type="journal article" date="2006" name="Proc. Natl. Acad. Sci. U.S.A.">
        <title>Comparative genomics of the lactic acid bacteria.</title>
        <authorList>
            <person name="Makarova K.S."/>
            <person name="Slesarev A."/>
            <person name="Wolf Y.I."/>
            <person name="Sorokin A."/>
            <person name="Mirkin B."/>
            <person name="Koonin E.V."/>
            <person name="Pavlov A."/>
            <person name="Pavlova N."/>
            <person name="Karamychev V."/>
            <person name="Polouchine N."/>
            <person name="Shakhova V."/>
            <person name="Grigoriev I."/>
            <person name="Lou Y."/>
            <person name="Rohksar D."/>
            <person name="Lucas S."/>
            <person name="Huang K."/>
            <person name="Goodstein D.M."/>
            <person name="Hawkins T."/>
            <person name="Plengvidhya V."/>
            <person name="Welker D."/>
            <person name="Hughes J."/>
            <person name="Goh Y."/>
            <person name="Benson A."/>
            <person name="Baldwin K."/>
            <person name="Lee J.-H."/>
            <person name="Diaz-Muniz I."/>
            <person name="Dosti B."/>
            <person name="Smeianov V."/>
            <person name="Wechter W."/>
            <person name="Barabote R."/>
            <person name="Lorca G."/>
            <person name="Altermann E."/>
            <person name="Barrangou R."/>
            <person name="Ganesan B."/>
            <person name="Xie Y."/>
            <person name="Rawsthorne H."/>
            <person name="Tamir D."/>
            <person name="Parker C."/>
            <person name="Breidt F."/>
            <person name="Broadbent J.R."/>
            <person name="Hutkins R."/>
            <person name="O'Sullivan D."/>
            <person name="Steele J."/>
            <person name="Unlu G."/>
            <person name="Saier M.H. Jr."/>
            <person name="Klaenhammer T."/>
            <person name="Richardson P."/>
            <person name="Kozyavkin S."/>
            <person name="Weimer B.C."/>
            <person name="Mills D.A."/>
        </authorList>
    </citation>
    <scope>NUCLEOTIDE SEQUENCE [LARGE SCALE GENOMIC DNA]</scope>
    <source>
        <strain>ATCC 334 / BCRC 17002 / CCUG 31169 / CIP 107868 / KCTC 3260 / NRRL B-441</strain>
    </source>
</reference>
<accession>Q034T0</accession>
<comment type="subunit">
    <text evidence="1">Part of the 50S ribosomal subunit.</text>
</comment>
<comment type="similarity">
    <text evidence="1">Belongs to the bacterial ribosomal protein bL31 family. Type B subfamily.</text>
</comment>
<proteinExistence type="inferred from homology"/>
<name>RL31B_LACP3</name>
<evidence type="ECO:0000255" key="1">
    <source>
        <dbReference type="HAMAP-Rule" id="MF_00502"/>
    </source>
</evidence>
<evidence type="ECO:0000305" key="2"/>
<gene>
    <name evidence="1" type="primary">rpmE2</name>
    <name type="ordered locus">LSEI_2569</name>
</gene>
<feature type="chain" id="PRO_1000126813" description="Large ribosomal subunit protein bL31B">
    <location>
        <begin position="1"/>
        <end position="83"/>
    </location>
</feature>
<protein>
    <recommendedName>
        <fullName evidence="1">Large ribosomal subunit protein bL31B</fullName>
    </recommendedName>
    <alternativeName>
        <fullName evidence="2">50S ribosomal protein L31 type B</fullName>
    </alternativeName>
</protein>
<keyword id="KW-1185">Reference proteome</keyword>
<keyword id="KW-0687">Ribonucleoprotein</keyword>
<keyword id="KW-0689">Ribosomal protein</keyword>
<sequence length="83" mass="9548">MKQGIHPDYHPVVFMDSATGFKFISGSTKTSKETVKWEDGKEYPLVRVEISSDSHPFYTGKQKFTQADGRVDRFNKKYGLDKK</sequence>
<dbReference type="EMBL" id="CP000423">
    <property type="protein sequence ID" value="ABJ71292.1"/>
    <property type="molecule type" value="Genomic_DNA"/>
</dbReference>
<dbReference type="RefSeq" id="WP_003567687.1">
    <property type="nucleotide sequence ID" value="NC_008526.1"/>
</dbReference>
<dbReference type="RefSeq" id="YP_807734.1">
    <property type="nucleotide sequence ID" value="NC_008526.1"/>
</dbReference>
<dbReference type="SMR" id="Q034T0"/>
<dbReference type="STRING" id="321967.LSEI_2569"/>
<dbReference type="PaxDb" id="321967-LSEI_2569"/>
<dbReference type="KEGG" id="lca:LSEI_2569"/>
<dbReference type="PATRIC" id="fig|321967.11.peg.2510"/>
<dbReference type="HOGENOM" id="CLU_114306_2_2_9"/>
<dbReference type="Proteomes" id="UP000001651">
    <property type="component" value="Chromosome"/>
</dbReference>
<dbReference type="GO" id="GO:1990904">
    <property type="term" value="C:ribonucleoprotein complex"/>
    <property type="evidence" value="ECO:0007669"/>
    <property type="project" value="UniProtKB-KW"/>
</dbReference>
<dbReference type="GO" id="GO:0005840">
    <property type="term" value="C:ribosome"/>
    <property type="evidence" value="ECO:0007669"/>
    <property type="project" value="UniProtKB-KW"/>
</dbReference>
<dbReference type="GO" id="GO:0003735">
    <property type="term" value="F:structural constituent of ribosome"/>
    <property type="evidence" value="ECO:0007669"/>
    <property type="project" value="InterPro"/>
</dbReference>
<dbReference type="GO" id="GO:0006412">
    <property type="term" value="P:translation"/>
    <property type="evidence" value="ECO:0007669"/>
    <property type="project" value="UniProtKB-UniRule"/>
</dbReference>
<dbReference type="Gene3D" id="4.10.830.30">
    <property type="entry name" value="Ribosomal protein L31"/>
    <property type="match status" value="1"/>
</dbReference>
<dbReference type="HAMAP" id="MF_00502">
    <property type="entry name" value="Ribosomal_bL31_2"/>
    <property type="match status" value="1"/>
</dbReference>
<dbReference type="InterPro" id="IPR034704">
    <property type="entry name" value="Ribosomal_bL28/bL31-like_sf"/>
</dbReference>
<dbReference type="InterPro" id="IPR002150">
    <property type="entry name" value="Ribosomal_bL31"/>
</dbReference>
<dbReference type="InterPro" id="IPR027493">
    <property type="entry name" value="Ribosomal_bL31_B"/>
</dbReference>
<dbReference type="InterPro" id="IPR042105">
    <property type="entry name" value="Ribosomal_bL31_sf"/>
</dbReference>
<dbReference type="NCBIfam" id="TIGR00105">
    <property type="entry name" value="L31"/>
    <property type="match status" value="1"/>
</dbReference>
<dbReference type="NCBIfam" id="NF002462">
    <property type="entry name" value="PRK01678.1"/>
    <property type="match status" value="1"/>
</dbReference>
<dbReference type="PANTHER" id="PTHR33280">
    <property type="entry name" value="50S RIBOSOMAL PROTEIN L31, CHLOROPLASTIC"/>
    <property type="match status" value="1"/>
</dbReference>
<dbReference type="PANTHER" id="PTHR33280:SF1">
    <property type="entry name" value="LARGE RIBOSOMAL SUBUNIT PROTEIN BL31C"/>
    <property type="match status" value="1"/>
</dbReference>
<dbReference type="Pfam" id="PF01197">
    <property type="entry name" value="Ribosomal_L31"/>
    <property type="match status" value="1"/>
</dbReference>
<dbReference type="PRINTS" id="PR01249">
    <property type="entry name" value="RIBOSOMALL31"/>
</dbReference>
<dbReference type="SUPFAM" id="SSF143800">
    <property type="entry name" value="L28p-like"/>
    <property type="match status" value="1"/>
</dbReference>
<dbReference type="PROSITE" id="PS01143">
    <property type="entry name" value="RIBOSOMAL_L31"/>
    <property type="match status" value="1"/>
</dbReference>